<evidence type="ECO:0000255" key="1">
    <source>
        <dbReference type="HAMAP-Rule" id="MF_00607"/>
    </source>
</evidence>
<reference key="1">
    <citation type="journal article" date="1998" name="Science">
        <title>Genome sequence of an obligate intracellular pathogen of humans: Chlamydia trachomatis.</title>
        <authorList>
            <person name="Stephens R.S."/>
            <person name="Kalman S."/>
            <person name="Lammel C.J."/>
            <person name="Fan J."/>
            <person name="Marathe R."/>
            <person name="Aravind L."/>
            <person name="Mitchell W.P."/>
            <person name="Olinger L."/>
            <person name="Tatusov R.L."/>
            <person name="Zhao Q."/>
            <person name="Koonin E.V."/>
            <person name="Davis R.W."/>
        </authorList>
    </citation>
    <scope>NUCLEOTIDE SEQUENCE [LARGE SCALE GENOMIC DNA]</scope>
    <source>
        <strain>ATCC VR-885 / DSM 19411 / UW-3/Cx</strain>
    </source>
</reference>
<organism>
    <name type="scientific">Chlamydia trachomatis serovar D (strain ATCC VR-885 / DSM 19411 / UW-3/Cx)</name>
    <dbReference type="NCBI Taxonomy" id="272561"/>
    <lineage>
        <taxon>Bacteria</taxon>
        <taxon>Pseudomonadati</taxon>
        <taxon>Chlamydiota</taxon>
        <taxon>Chlamydiia</taxon>
        <taxon>Chlamydiales</taxon>
        <taxon>Chlamydiaceae</taxon>
        <taxon>Chlamydia/Chlamydophila group</taxon>
        <taxon>Chlamydia</taxon>
    </lineage>
</organism>
<name>RSMA_CHLTR</name>
<gene>
    <name evidence="1" type="primary">rsmA</name>
    <name type="synonym">kgsA</name>
    <name evidence="1" type="synonym">ksgA</name>
    <name type="ordered locus">CT_354</name>
</gene>
<comment type="function">
    <text evidence="1">Specifically dimethylates two adjacent adenosines (A1518 and A1519) in the loop of a conserved hairpin near the 3'-end of 16S rRNA in the 30S particle. May play a critical role in biogenesis of 30S subunits.</text>
</comment>
<comment type="catalytic activity">
    <reaction evidence="1">
        <text>adenosine(1518)/adenosine(1519) in 16S rRNA + 4 S-adenosyl-L-methionine = N(6)-dimethyladenosine(1518)/N(6)-dimethyladenosine(1519) in 16S rRNA + 4 S-adenosyl-L-homocysteine + 4 H(+)</text>
        <dbReference type="Rhea" id="RHEA:19609"/>
        <dbReference type="Rhea" id="RHEA-COMP:10232"/>
        <dbReference type="Rhea" id="RHEA-COMP:10233"/>
        <dbReference type="ChEBI" id="CHEBI:15378"/>
        <dbReference type="ChEBI" id="CHEBI:57856"/>
        <dbReference type="ChEBI" id="CHEBI:59789"/>
        <dbReference type="ChEBI" id="CHEBI:74411"/>
        <dbReference type="ChEBI" id="CHEBI:74493"/>
        <dbReference type="EC" id="2.1.1.182"/>
    </reaction>
</comment>
<comment type="subcellular location">
    <subcellularLocation>
        <location evidence="1">Cytoplasm</location>
    </subcellularLocation>
</comment>
<comment type="similarity">
    <text evidence="1">Belongs to the class I-like SAM-binding methyltransferase superfamily. rRNA adenine N(6)-methyltransferase family. RsmA subfamily.</text>
</comment>
<sequence>MARSSIEQLTSFLRSVNGRAKKALSQNFLVDGNILRKILTTAEVQPGDWVLEIGPGFGALSEVLLSQGANVIALEKDPMFEESLSQLPMDIEITDACKYPLTSLEDKGWKGKGRIVANLPYHITTPLLTKFFLECPYRWKTVTVMIQDEVARRITAKPGDKDYGSLTVFLSFFADVQYAFKVSPNCFYPKPSVHSAVVHMRVHEQFALADSEIEEFFTLTRAAFGQRRKLLANSLKNLYPKDKVFQVLEQLGFSEKTRPETIFLEEYLKIFHLLKDI</sequence>
<keyword id="KW-0963">Cytoplasm</keyword>
<keyword id="KW-0489">Methyltransferase</keyword>
<keyword id="KW-1185">Reference proteome</keyword>
<keyword id="KW-0694">RNA-binding</keyword>
<keyword id="KW-0698">rRNA processing</keyword>
<keyword id="KW-0949">S-adenosyl-L-methionine</keyword>
<keyword id="KW-0808">Transferase</keyword>
<protein>
    <recommendedName>
        <fullName evidence="1">Ribosomal RNA small subunit methyltransferase A</fullName>
        <ecNumber evidence="1">2.1.1.182</ecNumber>
    </recommendedName>
    <alternativeName>
        <fullName evidence="1">16S rRNA (adenine(1518)-N(6)/adenine(1519)-N(6))-dimethyltransferase</fullName>
    </alternativeName>
    <alternativeName>
        <fullName evidence="1">16S rRNA dimethyladenosine transferase</fullName>
    </alternativeName>
    <alternativeName>
        <fullName evidence="1">16S rRNA dimethylase</fullName>
    </alternativeName>
    <alternativeName>
        <fullName evidence="1">S-adenosylmethionine-6-N', N'-adenosyl(rRNA) dimethyltransferase</fullName>
    </alternativeName>
</protein>
<accession>O84358</accession>
<proteinExistence type="inferred from homology"/>
<dbReference type="EC" id="2.1.1.182" evidence="1"/>
<dbReference type="EMBL" id="AE001273">
    <property type="protein sequence ID" value="AAC67949.1"/>
    <property type="molecule type" value="Genomic_DNA"/>
</dbReference>
<dbReference type="PIR" id="C71526">
    <property type="entry name" value="C71526"/>
</dbReference>
<dbReference type="RefSeq" id="NP_219862.1">
    <property type="nucleotide sequence ID" value="NC_000117.1"/>
</dbReference>
<dbReference type="RefSeq" id="WP_009873749.1">
    <property type="nucleotide sequence ID" value="NC_000117.1"/>
</dbReference>
<dbReference type="SMR" id="O84358"/>
<dbReference type="FunCoup" id="O84358">
    <property type="interactions" value="227"/>
</dbReference>
<dbReference type="STRING" id="272561.CT_354"/>
<dbReference type="EnsemblBacteria" id="AAC67949">
    <property type="protein sequence ID" value="AAC67949"/>
    <property type="gene ID" value="CT_354"/>
</dbReference>
<dbReference type="GeneID" id="884765"/>
<dbReference type="KEGG" id="ctr:CT_354"/>
<dbReference type="PATRIC" id="fig|272561.5.peg.382"/>
<dbReference type="HOGENOM" id="CLU_041220_0_0_0"/>
<dbReference type="InParanoid" id="O84358"/>
<dbReference type="OrthoDB" id="9814755at2"/>
<dbReference type="Proteomes" id="UP000000431">
    <property type="component" value="Chromosome"/>
</dbReference>
<dbReference type="GO" id="GO:0005829">
    <property type="term" value="C:cytosol"/>
    <property type="evidence" value="ECO:0000318"/>
    <property type="project" value="GO_Central"/>
</dbReference>
<dbReference type="GO" id="GO:0052908">
    <property type="term" value="F:16S rRNA (adenine(1518)-N(6)/adenine(1519)-N(6))-dimethyltransferase activity"/>
    <property type="evidence" value="ECO:0007669"/>
    <property type="project" value="UniProtKB-EC"/>
</dbReference>
<dbReference type="GO" id="GO:0003723">
    <property type="term" value="F:RNA binding"/>
    <property type="evidence" value="ECO:0007669"/>
    <property type="project" value="UniProtKB-KW"/>
</dbReference>
<dbReference type="GO" id="GO:0000179">
    <property type="term" value="F:rRNA (adenine-N6,N6-)-dimethyltransferase activity"/>
    <property type="evidence" value="ECO:0000318"/>
    <property type="project" value="GO_Central"/>
</dbReference>
<dbReference type="GO" id="GO:0031167">
    <property type="term" value="P:rRNA methylation"/>
    <property type="evidence" value="ECO:0000318"/>
    <property type="project" value="GO_Central"/>
</dbReference>
<dbReference type="FunFam" id="3.40.50.150:FF:000594">
    <property type="entry name" value="Ribosomal RNA small subunit methyltransferase A"/>
    <property type="match status" value="1"/>
</dbReference>
<dbReference type="Gene3D" id="1.10.8.100">
    <property type="entry name" value="Ribosomal RNA adenine dimethylase-like, domain 2"/>
    <property type="match status" value="1"/>
</dbReference>
<dbReference type="Gene3D" id="3.40.50.150">
    <property type="entry name" value="Vaccinia Virus protein VP39"/>
    <property type="match status" value="1"/>
</dbReference>
<dbReference type="HAMAP" id="MF_00607">
    <property type="entry name" value="16SrRNA_methyltr_A"/>
    <property type="match status" value="1"/>
</dbReference>
<dbReference type="InterPro" id="IPR001737">
    <property type="entry name" value="KsgA/Erm"/>
</dbReference>
<dbReference type="InterPro" id="IPR023165">
    <property type="entry name" value="rRNA_Ade_diMease-like_C"/>
</dbReference>
<dbReference type="InterPro" id="IPR020596">
    <property type="entry name" value="rRNA_Ade_Mease_Trfase_CS"/>
</dbReference>
<dbReference type="InterPro" id="IPR020598">
    <property type="entry name" value="rRNA_Ade_methylase_Trfase_N"/>
</dbReference>
<dbReference type="InterPro" id="IPR011530">
    <property type="entry name" value="rRNA_adenine_dimethylase"/>
</dbReference>
<dbReference type="InterPro" id="IPR029063">
    <property type="entry name" value="SAM-dependent_MTases_sf"/>
</dbReference>
<dbReference type="NCBIfam" id="TIGR00755">
    <property type="entry name" value="ksgA"/>
    <property type="match status" value="1"/>
</dbReference>
<dbReference type="PANTHER" id="PTHR11727">
    <property type="entry name" value="DIMETHYLADENOSINE TRANSFERASE"/>
    <property type="match status" value="1"/>
</dbReference>
<dbReference type="PANTHER" id="PTHR11727:SF7">
    <property type="entry name" value="DIMETHYLADENOSINE TRANSFERASE-RELATED"/>
    <property type="match status" value="1"/>
</dbReference>
<dbReference type="Pfam" id="PF00398">
    <property type="entry name" value="RrnaAD"/>
    <property type="match status" value="1"/>
</dbReference>
<dbReference type="SMART" id="SM00650">
    <property type="entry name" value="rADc"/>
    <property type="match status" value="1"/>
</dbReference>
<dbReference type="SUPFAM" id="SSF53335">
    <property type="entry name" value="S-adenosyl-L-methionine-dependent methyltransferases"/>
    <property type="match status" value="1"/>
</dbReference>
<dbReference type="PROSITE" id="PS01131">
    <property type="entry name" value="RRNA_A_DIMETH"/>
    <property type="match status" value="1"/>
</dbReference>
<dbReference type="PROSITE" id="PS51689">
    <property type="entry name" value="SAM_RNA_A_N6_MT"/>
    <property type="match status" value="1"/>
</dbReference>
<feature type="chain" id="PRO_0000101513" description="Ribosomal RNA small subunit methyltransferase A">
    <location>
        <begin position="1"/>
        <end position="277"/>
    </location>
</feature>
<feature type="binding site" evidence="1">
    <location>
        <position position="27"/>
    </location>
    <ligand>
        <name>S-adenosyl-L-methionine</name>
        <dbReference type="ChEBI" id="CHEBI:59789"/>
    </ligand>
</feature>
<feature type="binding site" evidence="1">
    <location>
        <position position="29"/>
    </location>
    <ligand>
        <name>S-adenosyl-L-methionine</name>
        <dbReference type="ChEBI" id="CHEBI:59789"/>
    </ligand>
</feature>
<feature type="binding site" evidence="1">
    <location>
        <position position="54"/>
    </location>
    <ligand>
        <name>S-adenosyl-L-methionine</name>
        <dbReference type="ChEBI" id="CHEBI:59789"/>
    </ligand>
</feature>
<feature type="binding site" evidence="1">
    <location>
        <position position="75"/>
    </location>
    <ligand>
        <name>S-adenosyl-L-methionine</name>
        <dbReference type="ChEBI" id="CHEBI:59789"/>
    </ligand>
</feature>
<feature type="binding site" evidence="1">
    <location>
        <position position="95"/>
    </location>
    <ligand>
        <name>S-adenosyl-L-methionine</name>
        <dbReference type="ChEBI" id="CHEBI:59789"/>
    </ligand>
</feature>
<feature type="binding site" evidence="1">
    <location>
        <position position="118"/>
    </location>
    <ligand>
        <name>S-adenosyl-L-methionine</name>
        <dbReference type="ChEBI" id="CHEBI:59789"/>
    </ligand>
</feature>